<proteinExistence type="inferred from homology"/>
<feature type="chain" id="PRO_0000060356" description="tRNA (guanine-N(1)-)-methyltransferase">
    <location>
        <begin position="1"/>
        <end position="355"/>
    </location>
</feature>
<feature type="binding site" evidence="1">
    <location>
        <position position="109"/>
    </location>
    <ligand>
        <name>S-adenosyl-L-methionine</name>
        <dbReference type="ChEBI" id="CHEBI:59789"/>
    </ligand>
</feature>
<feature type="binding site" evidence="1">
    <location>
        <begin position="129"/>
        <end position="134"/>
    </location>
    <ligand>
        <name>S-adenosyl-L-methionine</name>
        <dbReference type="ChEBI" id="CHEBI:59789"/>
    </ligand>
</feature>
<accession>Q5L5L8</accession>
<protein>
    <recommendedName>
        <fullName evidence="1">tRNA (guanine-N(1)-)-methyltransferase</fullName>
        <ecNumber evidence="1">2.1.1.228</ecNumber>
    </recommendedName>
    <alternativeName>
        <fullName evidence="1">M1G-methyltransferase</fullName>
    </alternativeName>
    <alternativeName>
        <fullName evidence="1">tRNA [GM37] methyltransferase</fullName>
    </alternativeName>
</protein>
<name>TRMD_CHLAB</name>
<keyword id="KW-0963">Cytoplasm</keyword>
<keyword id="KW-0489">Methyltransferase</keyword>
<keyword id="KW-0949">S-adenosyl-L-methionine</keyword>
<keyword id="KW-0808">Transferase</keyword>
<keyword id="KW-0819">tRNA processing</keyword>
<sequence>MKIDILSLFPEYFDSPLRSSILGRAIKRGLLDIQSRDIREFGLGKWKQVDDAPFNHDGMLLMAEPVVKAIRHVKRSDSKVVYLSPQGQLLTAKKSRELAQCSHLIFLCGHYEGIDERALESEVDEEISIGDYVLTNGGIAALVVIDALSRFIPGVLGNQESADKDSMENGLLEGPQYTRPRVFEGREVPEVLLHGDHQAIAKWRKQISLDRTRERRPDLYIRYLYDRENEEVTQQETDLKQSMLEGESAVILEVEDLHRSRKFYSKMFRLNQPVNNRLHIPGKTQMTIHLQEVGLKSKNIVLLSLRLGCKDDFFSFLGRWKMLGGTLEQADDRGEVRLVRDFDGHVWAISCKQAE</sequence>
<dbReference type="EC" id="2.1.1.228" evidence="1"/>
<dbReference type="EMBL" id="CR848038">
    <property type="protein sequence ID" value="CAH64073.1"/>
    <property type="molecule type" value="Genomic_DNA"/>
</dbReference>
<dbReference type="RefSeq" id="WP_011097214.1">
    <property type="nucleotide sequence ID" value="NC_004552.2"/>
</dbReference>
<dbReference type="SMR" id="Q5L5L8"/>
<dbReference type="KEGG" id="cab:CAB627"/>
<dbReference type="eggNOG" id="COG0336">
    <property type="taxonomic scope" value="Bacteria"/>
</dbReference>
<dbReference type="HOGENOM" id="CLU_047363_0_2_0"/>
<dbReference type="OrthoDB" id="9807416at2"/>
<dbReference type="Proteomes" id="UP000001012">
    <property type="component" value="Chromosome"/>
</dbReference>
<dbReference type="GO" id="GO:0005829">
    <property type="term" value="C:cytosol"/>
    <property type="evidence" value="ECO:0007669"/>
    <property type="project" value="TreeGrafter"/>
</dbReference>
<dbReference type="GO" id="GO:0052906">
    <property type="term" value="F:tRNA (guanine(37)-N1)-methyltransferase activity"/>
    <property type="evidence" value="ECO:0007669"/>
    <property type="project" value="UniProtKB-UniRule"/>
</dbReference>
<dbReference type="GO" id="GO:0002939">
    <property type="term" value="P:tRNA N1-guanine methylation"/>
    <property type="evidence" value="ECO:0007669"/>
    <property type="project" value="TreeGrafter"/>
</dbReference>
<dbReference type="CDD" id="cd18080">
    <property type="entry name" value="TrmD-like"/>
    <property type="match status" value="1"/>
</dbReference>
<dbReference type="FunFam" id="1.10.1270.20:FF:000004">
    <property type="entry name" value="tRNA (guanine-N(1)-)-methyltransferase"/>
    <property type="match status" value="1"/>
</dbReference>
<dbReference type="FunFam" id="3.40.1280.10:FF:000001">
    <property type="entry name" value="tRNA (guanine-N(1)-)-methyltransferase"/>
    <property type="match status" value="1"/>
</dbReference>
<dbReference type="Gene3D" id="3.40.1280.10">
    <property type="match status" value="1"/>
</dbReference>
<dbReference type="Gene3D" id="1.10.1270.20">
    <property type="entry name" value="tRNA(m1g37)methyltransferase, domain 2"/>
    <property type="match status" value="1"/>
</dbReference>
<dbReference type="HAMAP" id="MF_00605">
    <property type="entry name" value="TrmD"/>
    <property type="match status" value="1"/>
</dbReference>
<dbReference type="InterPro" id="IPR029028">
    <property type="entry name" value="Alpha/beta_knot_MTases"/>
</dbReference>
<dbReference type="InterPro" id="IPR029068">
    <property type="entry name" value="Glyas_Bleomycin-R_OHBP_Dase"/>
</dbReference>
<dbReference type="InterPro" id="IPR023148">
    <property type="entry name" value="tRNA_m1G_MeTrfase_C_sf"/>
</dbReference>
<dbReference type="InterPro" id="IPR002649">
    <property type="entry name" value="tRNA_m1G_MeTrfase_TrmD"/>
</dbReference>
<dbReference type="InterPro" id="IPR029026">
    <property type="entry name" value="tRNA_m1G_MTases_N"/>
</dbReference>
<dbReference type="InterPro" id="IPR016009">
    <property type="entry name" value="tRNA_MeTrfase_TRMD/TRM10"/>
</dbReference>
<dbReference type="NCBIfam" id="NF000648">
    <property type="entry name" value="PRK00026.1"/>
    <property type="match status" value="1"/>
</dbReference>
<dbReference type="NCBIfam" id="TIGR00088">
    <property type="entry name" value="trmD"/>
    <property type="match status" value="1"/>
</dbReference>
<dbReference type="PANTHER" id="PTHR46417">
    <property type="entry name" value="TRNA (GUANINE-N(1)-)-METHYLTRANSFERASE"/>
    <property type="match status" value="1"/>
</dbReference>
<dbReference type="PANTHER" id="PTHR46417:SF1">
    <property type="entry name" value="TRNA (GUANINE-N(1)-)-METHYLTRANSFERASE"/>
    <property type="match status" value="1"/>
</dbReference>
<dbReference type="Pfam" id="PF01746">
    <property type="entry name" value="tRNA_m1G_MT"/>
    <property type="match status" value="1"/>
</dbReference>
<dbReference type="SUPFAM" id="SSF75217">
    <property type="entry name" value="alpha/beta knot"/>
    <property type="match status" value="1"/>
</dbReference>
<dbReference type="SUPFAM" id="SSF54593">
    <property type="entry name" value="Glyoxalase/Bleomycin resistance protein/Dihydroxybiphenyl dioxygenase"/>
    <property type="match status" value="1"/>
</dbReference>
<gene>
    <name evidence="1" type="primary">trmD</name>
    <name type="ordered locus">CAB627</name>
</gene>
<evidence type="ECO:0000255" key="1">
    <source>
        <dbReference type="HAMAP-Rule" id="MF_00605"/>
    </source>
</evidence>
<organism>
    <name type="scientific">Chlamydia abortus (strain DSM 27085 / S26/3)</name>
    <name type="common">Chlamydophila abortus</name>
    <dbReference type="NCBI Taxonomy" id="218497"/>
    <lineage>
        <taxon>Bacteria</taxon>
        <taxon>Pseudomonadati</taxon>
        <taxon>Chlamydiota</taxon>
        <taxon>Chlamydiia</taxon>
        <taxon>Chlamydiales</taxon>
        <taxon>Chlamydiaceae</taxon>
        <taxon>Chlamydia/Chlamydophila group</taxon>
        <taxon>Chlamydia</taxon>
    </lineage>
</organism>
<comment type="function">
    <text evidence="1">Specifically methylates guanosine-37 in various tRNAs.</text>
</comment>
<comment type="catalytic activity">
    <reaction evidence="1">
        <text>guanosine(37) in tRNA + S-adenosyl-L-methionine = N(1)-methylguanosine(37) in tRNA + S-adenosyl-L-homocysteine + H(+)</text>
        <dbReference type="Rhea" id="RHEA:36899"/>
        <dbReference type="Rhea" id="RHEA-COMP:10145"/>
        <dbReference type="Rhea" id="RHEA-COMP:10147"/>
        <dbReference type="ChEBI" id="CHEBI:15378"/>
        <dbReference type="ChEBI" id="CHEBI:57856"/>
        <dbReference type="ChEBI" id="CHEBI:59789"/>
        <dbReference type="ChEBI" id="CHEBI:73542"/>
        <dbReference type="ChEBI" id="CHEBI:74269"/>
        <dbReference type="EC" id="2.1.1.228"/>
    </reaction>
</comment>
<comment type="subunit">
    <text evidence="1">Homodimer.</text>
</comment>
<comment type="subcellular location">
    <subcellularLocation>
        <location evidence="1">Cytoplasm</location>
    </subcellularLocation>
</comment>
<comment type="similarity">
    <text evidence="1">Belongs to the RNA methyltransferase TrmD family.</text>
</comment>
<reference key="1">
    <citation type="journal article" date="2005" name="Genome Res.">
        <title>The Chlamydophila abortus genome sequence reveals an array of variable proteins that contribute to interspecies variation.</title>
        <authorList>
            <person name="Thomson N.R."/>
            <person name="Yeats C."/>
            <person name="Bell K."/>
            <person name="Holden M.T.G."/>
            <person name="Bentley S.D."/>
            <person name="Livingstone M."/>
            <person name="Cerdeno-Tarraga A.-M."/>
            <person name="Harris B."/>
            <person name="Doggett J."/>
            <person name="Ormond D."/>
            <person name="Mungall K."/>
            <person name="Clarke K."/>
            <person name="Feltwell T."/>
            <person name="Hance Z."/>
            <person name="Sanders M."/>
            <person name="Quail M.A."/>
            <person name="Price C."/>
            <person name="Barrell B.G."/>
            <person name="Parkhill J."/>
            <person name="Longbottom D."/>
        </authorList>
    </citation>
    <scope>NUCLEOTIDE SEQUENCE [LARGE SCALE GENOMIC DNA]</scope>
    <source>
        <strain>DSM 27085 / S26/3</strain>
    </source>
</reference>